<dbReference type="EC" id="4.2.1.136"/>
<dbReference type="EC" id="5.1.99.6"/>
<dbReference type="EMBL" id="AE000782">
    <property type="protein sequence ID" value="AAB90387.1"/>
    <property type="molecule type" value="Genomic_DNA"/>
</dbReference>
<dbReference type="PIR" id="C69356">
    <property type="entry name" value="C69356"/>
</dbReference>
<dbReference type="RefSeq" id="WP_010878354.1">
    <property type="nucleotide sequence ID" value="NC_000917.1"/>
</dbReference>
<dbReference type="SMR" id="O29407"/>
<dbReference type="STRING" id="224325.AF_0851"/>
<dbReference type="PaxDb" id="224325-AF_0851"/>
<dbReference type="EnsemblBacteria" id="AAB90387">
    <property type="protein sequence ID" value="AAB90387"/>
    <property type="gene ID" value="AF_0851"/>
</dbReference>
<dbReference type="KEGG" id="afu:AF_0851"/>
<dbReference type="eggNOG" id="arCOG00018">
    <property type="taxonomic scope" value="Archaea"/>
</dbReference>
<dbReference type="HOGENOM" id="CLU_024853_4_1_2"/>
<dbReference type="OrthoDB" id="15148at2157"/>
<dbReference type="PhylomeDB" id="O29407"/>
<dbReference type="Proteomes" id="UP000002199">
    <property type="component" value="Chromosome"/>
</dbReference>
<dbReference type="GO" id="GO:0052855">
    <property type="term" value="F:ADP-dependent NAD(P)H-hydrate dehydratase activity"/>
    <property type="evidence" value="ECO:0007669"/>
    <property type="project" value="UniProtKB-UniRule"/>
</dbReference>
<dbReference type="GO" id="GO:0005524">
    <property type="term" value="F:ATP binding"/>
    <property type="evidence" value="ECO:0007669"/>
    <property type="project" value="UniProtKB-KW"/>
</dbReference>
<dbReference type="GO" id="GO:0046872">
    <property type="term" value="F:metal ion binding"/>
    <property type="evidence" value="ECO:0007669"/>
    <property type="project" value="UniProtKB-KW"/>
</dbReference>
<dbReference type="GO" id="GO:0052856">
    <property type="term" value="F:NAD(P)HX epimerase activity"/>
    <property type="evidence" value="ECO:0007669"/>
    <property type="project" value="UniProtKB-UniRule"/>
</dbReference>
<dbReference type="GO" id="GO:0110051">
    <property type="term" value="P:metabolite repair"/>
    <property type="evidence" value="ECO:0007669"/>
    <property type="project" value="TreeGrafter"/>
</dbReference>
<dbReference type="GO" id="GO:0046496">
    <property type="term" value="P:nicotinamide nucleotide metabolic process"/>
    <property type="evidence" value="ECO:0007669"/>
    <property type="project" value="UniProtKB-UniRule"/>
</dbReference>
<dbReference type="CDD" id="cd01171">
    <property type="entry name" value="YXKO-related"/>
    <property type="match status" value="1"/>
</dbReference>
<dbReference type="Gene3D" id="3.40.1190.20">
    <property type="match status" value="1"/>
</dbReference>
<dbReference type="Gene3D" id="3.40.50.10260">
    <property type="entry name" value="YjeF N-terminal domain"/>
    <property type="match status" value="1"/>
</dbReference>
<dbReference type="HAMAP" id="MF_01965">
    <property type="entry name" value="NADHX_dehydratase"/>
    <property type="match status" value="1"/>
</dbReference>
<dbReference type="HAMAP" id="MF_01966">
    <property type="entry name" value="NADHX_epimerase"/>
    <property type="match status" value="1"/>
</dbReference>
<dbReference type="InterPro" id="IPR000631">
    <property type="entry name" value="CARKD"/>
</dbReference>
<dbReference type="InterPro" id="IPR030677">
    <property type="entry name" value="Nnr"/>
</dbReference>
<dbReference type="InterPro" id="IPR029056">
    <property type="entry name" value="Ribokinase-like"/>
</dbReference>
<dbReference type="InterPro" id="IPR004443">
    <property type="entry name" value="YjeF_N_dom"/>
</dbReference>
<dbReference type="InterPro" id="IPR036652">
    <property type="entry name" value="YjeF_N_dom_sf"/>
</dbReference>
<dbReference type="NCBIfam" id="TIGR00196">
    <property type="entry name" value="yjeF_cterm"/>
    <property type="match status" value="1"/>
</dbReference>
<dbReference type="NCBIfam" id="TIGR00197">
    <property type="entry name" value="yjeF_nterm"/>
    <property type="match status" value="1"/>
</dbReference>
<dbReference type="PANTHER" id="PTHR12592:SF0">
    <property type="entry name" value="ATP-DEPENDENT (S)-NAD(P)H-HYDRATE DEHYDRATASE"/>
    <property type="match status" value="1"/>
</dbReference>
<dbReference type="PANTHER" id="PTHR12592">
    <property type="entry name" value="ATP-DEPENDENT (S)-NAD(P)H-HYDRATE DEHYDRATASE FAMILY MEMBER"/>
    <property type="match status" value="1"/>
</dbReference>
<dbReference type="Pfam" id="PF01256">
    <property type="entry name" value="Carb_kinase"/>
    <property type="match status" value="1"/>
</dbReference>
<dbReference type="Pfam" id="PF03853">
    <property type="entry name" value="YjeF_N"/>
    <property type="match status" value="1"/>
</dbReference>
<dbReference type="PIRSF" id="PIRSF017184">
    <property type="entry name" value="Nnr"/>
    <property type="match status" value="1"/>
</dbReference>
<dbReference type="SUPFAM" id="SSF53613">
    <property type="entry name" value="Ribokinase-like"/>
    <property type="match status" value="1"/>
</dbReference>
<dbReference type="SUPFAM" id="SSF64153">
    <property type="entry name" value="YjeF N-terminal domain-like"/>
    <property type="match status" value="1"/>
</dbReference>
<dbReference type="PROSITE" id="PS51383">
    <property type="entry name" value="YJEF_C_3"/>
    <property type="match status" value="1"/>
</dbReference>
<dbReference type="PROSITE" id="PS51385">
    <property type="entry name" value="YJEF_N"/>
    <property type="match status" value="1"/>
</dbReference>
<accession>O29407</accession>
<gene>
    <name type="primary">nnr</name>
    <name type="ordered locus">AF_0851</name>
</gene>
<keyword id="KW-0067">ATP-binding</keyword>
<keyword id="KW-0413">Isomerase</keyword>
<keyword id="KW-0456">Lyase</keyword>
<keyword id="KW-0479">Metal-binding</keyword>
<keyword id="KW-0511">Multifunctional enzyme</keyword>
<keyword id="KW-0520">NAD</keyword>
<keyword id="KW-0521">NADP</keyword>
<keyword id="KW-0547">Nucleotide-binding</keyword>
<keyword id="KW-0630">Potassium</keyword>
<keyword id="KW-1185">Reference proteome</keyword>
<comment type="function">
    <text evidence="1">Bifunctional enzyme that catalyzes the epimerization of the S- and R-forms of NAD(P)HX and the dehydration of the S-form of NAD(P)HX at the expense of ADP, which is converted to AMP. This allows the repair of both epimers of NAD(P)HX, a damaged form of NAD(P)H that is a result of enzymatic or heat-dependent hydration (By similarity).</text>
</comment>
<comment type="catalytic activity">
    <reaction>
        <text>(6S)-NADHX + ADP = AMP + phosphate + NADH + H(+)</text>
        <dbReference type="Rhea" id="RHEA:32223"/>
        <dbReference type="ChEBI" id="CHEBI:15378"/>
        <dbReference type="ChEBI" id="CHEBI:43474"/>
        <dbReference type="ChEBI" id="CHEBI:57945"/>
        <dbReference type="ChEBI" id="CHEBI:64074"/>
        <dbReference type="ChEBI" id="CHEBI:456215"/>
        <dbReference type="ChEBI" id="CHEBI:456216"/>
        <dbReference type="EC" id="4.2.1.136"/>
    </reaction>
</comment>
<comment type="catalytic activity">
    <reaction>
        <text>(6S)-NADPHX + ADP = AMP + phosphate + NADPH + H(+)</text>
        <dbReference type="Rhea" id="RHEA:32235"/>
        <dbReference type="ChEBI" id="CHEBI:15378"/>
        <dbReference type="ChEBI" id="CHEBI:43474"/>
        <dbReference type="ChEBI" id="CHEBI:57783"/>
        <dbReference type="ChEBI" id="CHEBI:64076"/>
        <dbReference type="ChEBI" id="CHEBI:456215"/>
        <dbReference type="ChEBI" id="CHEBI:456216"/>
        <dbReference type="EC" id="4.2.1.136"/>
    </reaction>
</comment>
<comment type="catalytic activity">
    <reaction>
        <text>(6R)-NADHX = (6S)-NADHX</text>
        <dbReference type="Rhea" id="RHEA:32215"/>
        <dbReference type="ChEBI" id="CHEBI:64074"/>
        <dbReference type="ChEBI" id="CHEBI:64075"/>
        <dbReference type="EC" id="5.1.99.6"/>
    </reaction>
</comment>
<comment type="catalytic activity">
    <reaction>
        <text>(6R)-NADPHX = (6S)-NADPHX</text>
        <dbReference type="Rhea" id="RHEA:32227"/>
        <dbReference type="ChEBI" id="CHEBI:64076"/>
        <dbReference type="ChEBI" id="CHEBI:64077"/>
        <dbReference type="EC" id="5.1.99.6"/>
    </reaction>
</comment>
<comment type="cofactor">
    <cofactor evidence="1">
        <name>K(+)</name>
        <dbReference type="ChEBI" id="CHEBI:29103"/>
    </cofactor>
    <text evidence="1">Binds 1 potassium ion per subunit.</text>
</comment>
<comment type="similarity">
    <text evidence="2">In the N-terminal section; belongs to the NnrE/AIBP family.</text>
</comment>
<comment type="similarity">
    <text evidence="2">In the C-terminal section; belongs to the NnrD/CARKD family.</text>
</comment>
<reference key="1">
    <citation type="journal article" date="1997" name="Nature">
        <title>The complete genome sequence of the hyperthermophilic, sulphate-reducing archaeon Archaeoglobus fulgidus.</title>
        <authorList>
            <person name="Klenk H.-P."/>
            <person name="Clayton R.A."/>
            <person name="Tomb J.-F."/>
            <person name="White O."/>
            <person name="Nelson K.E."/>
            <person name="Ketchum K.A."/>
            <person name="Dodson R.J."/>
            <person name="Gwinn M.L."/>
            <person name="Hickey E.K."/>
            <person name="Peterson J.D."/>
            <person name="Richardson D.L."/>
            <person name="Kerlavage A.R."/>
            <person name="Graham D.E."/>
            <person name="Kyrpides N.C."/>
            <person name="Fleischmann R.D."/>
            <person name="Quackenbush J."/>
            <person name="Lee N.H."/>
            <person name="Sutton G.G."/>
            <person name="Gill S.R."/>
            <person name="Kirkness E.F."/>
            <person name="Dougherty B.A."/>
            <person name="McKenney K."/>
            <person name="Adams M.D."/>
            <person name="Loftus B.J."/>
            <person name="Peterson S.N."/>
            <person name="Reich C.I."/>
            <person name="McNeil L.K."/>
            <person name="Badger J.H."/>
            <person name="Glodek A."/>
            <person name="Zhou L."/>
            <person name="Overbeek R."/>
            <person name="Gocayne J.D."/>
            <person name="Weidman J.F."/>
            <person name="McDonald L.A."/>
            <person name="Utterback T.R."/>
            <person name="Cotton M.D."/>
            <person name="Spriggs T."/>
            <person name="Artiach P."/>
            <person name="Kaine B.P."/>
            <person name="Sykes S.M."/>
            <person name="Sadow P.W."/>
            <person name="D'Andrea K.P."/>
            <person name="Bowman C."/>
            <person name="Fujii C."/>
            <person name="Garland S.A."/>
            <person name="Mason T.M."/>
            <person name="Olsen G.J."/>
            <person name="Fraser C.M."/>
            <person name="Smith H.O."/>
            <person name="Woese C.R."/>
            <person name="Venter J.C."/>
        </authorList>
    </citation>
    <scope>NUCLEOTIDE SEQUENCE [LARGE SCALE GENOMIC DNA]</scope>
    <source>
        <strain>ATCC 49558 / DSM 4304 / JCM 9628 / NBRC 100126 / VC-16</strain>
    </source>
</reference>
<proteinExistence type="inferred from homology"/>
<protein>
    <recommendedName>
        <fullName>Bifunctional NAD(P)H-hydrate repair enzyme Nnr</fullName>
    </recommendedName>
    <alternativeName>
        <fullName>Nicotinamide nucleotide repair protein</fullName>
    </alternativeName>
    <domain>
        <recommendedName>
            <fullName>ADP-dependent (S)-NAD(P)H-hydrate dehydratase</fullName>
            <ecNumber>4.2.1.136</ecNumber>
        </recommendedName>
        <alternativeName>
            <fullName>ADP-dependent NAD(P)HX dehydratase</fullName>
        </alternativeName>
    </domain>
    <domain>
        <recommendedName>
            <fullName>NAD(P)H-hydrate epimerase</fullName>
            <ecNumber>5.1.99.6</ecNumber>
        </recommendedName>
        <alternativeName>
            <fullName>NAD(P)HX epimerase</fullName>
        </alternativeName>
    </domain>
</protein>
<organism>
    <name type="scientific">Archaeoglobus fulgidus (strain ATCC 49558 / DSM 4304 / JCM 9628 / NBRC 100126 / VC-16)</name>
    <dbReference type="NCBI Taxonomy" id="224325"/>
    <lineage>
        <taxon>Archaea</taxon>
        <taxon>Methanobacteriati</taxon>
        <taxon>Methanobacteriota</taxon>
        <taxon>Archaeoglobi</taxon>
        <taxon>Archaeoglobales</taxon>
        <taxon>Archaeoglobaceae</taxon>
        <taxon>Archaeoglobus</taxon>
    </lineage>
</organism>
<sequence>MEFISSRDMQILDTNCEYFGLSRMLLMENAGKGVAEEVMKRFYEGKVQIFAGSGNNGGDGFVAARHLKGFDVEIFLLSKPKTELAIKNLEICRKAGFPVKEGLPEEIDADIVIDAMLGTGVRGRLREPYSTAVKMINESDAFKVAVDVPTGLDPDSGSYEEAVKADLTVTFHKAKPGLAKAREVCGEVAVKDIGIPESFENLCGPGDVAFSYKRYEDAHKGVHGKVLVVGGGDYTGAPALASLAALYAGADIVTTAVPMAIRKVVASFSPNLIVRGVGEERIEMKNLEELEELVKRHDVVVAGMGVGENPEFKEVVEELLKSCKKAVLDAQGIVDSVPENCECILTPHRGEFGRVFGDTEVQKAALKAKAVILLKGREDVITDGSRVKVNRSGNAGMTVGGTGDVLAGIAAAFLCNDDAFHSACAAAFLNGLAGDVCFEKFGYNYTATDLVKAIPEAILRCKSF</sequence>
<name>NNR_ARCFU</name>
<evidence type="ECO:0000250" key="1"/>
<evidence type="ECO:0000305" key="2"/>
<feature type="chain" id="PRO_0000416425" description="Bifunctional NAD(P)H-hydrate repair enzyme Nnr">
    <location>
        <begin position="1"/>
        <end position="464"/>
    </location>
</feature>
<feature type="domain" description="YjeF N-terminal">
    <location>
        <begin position="9"/>
        <end position="201"/>
    </location>
</feature>
<feature type="domain" description="YjeF C-terminal">
    <location>
        <begin position="203"/>
        <end position="461"/>
    </location>
</feature>
<feature type="region of interest" description="NAD(P)H-hydrate epimerase" evidence="1">
    <location>
        <begin position="1"/>
        <end position="205"/>
    </location>
</feature>
<feature type="region of interest" description="NADPHX 1; for epimerase activity" evidence="1">
    <location>
        <begin position="55"/>
        <end position="59"/>
    </location>
</feature>
<feature type="region of interest" description="NADPHX 1; for epimerase activity" evidence="1">
    <location>
        <begin position="118"/>
        <end position="124"/>
    </location>
</feature>
<feature type="region of interest" description="ADP-dependent (S)-NAD(P)H-hydrate dehydratase" evidence="1">
    <location>
        <begin position="205"/>
        <end position="464"/>
    </location>
</feature>
<feature type="region of interest" description="NADPHX 2; for dehydratase activity" evidence="1">
    <location>
        <begin position="348"/>
        <end position="354"/>
    </location>
</feature>
<feature type="binding site" evidence="1">
    <location>
        <position position="56"/>
    </location>
    <ligand>
        <name>K(+)</name>
        <dbReference type="ChEBI" id="CHEBI:29103"/>
    </ligand>
</feature>
<feature type="binding site" evidence="1">
    <location>
        <position position="114"/>
    </location>
    <ligand>
        <name>K(+)</name>
        <dbReference type="ChEBI" id="CHEBI:29103"/>
    </ligand>
</feature>
<feature type="binding site" evidence="1">
    <location>
        <position position="129"/>
    </location>
    <ligand>
        <name>(6S)-NADPHX</name>
        <dbReference type="ChEBI" id="CHEBI:64076"/>
        <label>1</label>
        <note>for epimerase activity</note>
    </ligand>
</feature>
<feature type="binding site" evidence="1">
    <location>
        <position position="147"/>
    </location>
    <ligand>
        <name>(6S)-NADPHX</name>
        <dbReference type="ChEBI" id="CHEBI:64076"/>
        <label>1</label>
        <note>for epimerase activity</note>
    </ligand>
</feature>
<feature type="binding site" evidence="1">
    <location>
        <position position="150"/>
    </location>
    <ligand>
        <name>K(+)</name>
        <dbReference type="ChEBI" id="CHEBI:29103"/>
    </ligand>
</feature>
<feature type="binding site" evidence="1">
    <location>
        <position position="305"/>
    </location>
    <ligand>
        <name>(6S)-NADPHX</name>
        <dbReference type="ChEBI" id="CHEBI:64076"/>
        <label>2</label>
        <note>for dehydratase activity</note>
    </ligand>
</feature>
<feature type="binding site" evidence="1">
    <location>
        <begin position="375"/>
        <end position="379"/>
    </location>
    <ligand>
        <name>ADP</name>
        <dbReference type="ChEBI" id="CHEBI:456216"/>
    </ligand>
</feature>
<feature type="binding site" evidence="1">
    <location>
        <begin position="394"/>
        <end position="403"/>
    </location>
    <ligand>
        <name>ADP</name>
        <dbReference type="ChEBI" id="CHEBI:456216"/>
    </ligand>
</feature>
<feature type="binding site" evidence="1">
    <location>
        <position position="404"/>
    </location>
    <ligand>
        <name>(6S)-NADPHX</name>
        <dbReference type="ChEBI" id="CHEBI:64076"/>
        <label>2</label>
        <note>for dehydratase activity</note>
    </ligand>
</feature>